<gene>
    <name evidence="1" type="primary">rpoZ</name>
    <name type="ordered locus">Tmel_0098</name>
</gene>
<accession>A6LJ74</accession>
<name>RPOZ_THEM4</name>
<protein>
    <recommendedName>
        <fullName evidence="1">DNA-directed RNA polymerase subunit omega</fullName>
        <shortName evidence="1">RNAP omega subunit</shortName>
        <ecNumber evidence="1">2.7.7.6</ecNumber>
    </recommendedName>
    <alternativeName>
        <fullName evidence="1">RNA polymerase omega subunit</fullName>
    </alternativeName>
    <alternativeName>
        <fullName evidence="1">Transcriptase subunit omega</fullName>
    </alternativeName>
</protein>
<proteinExistence type="inferred from homology"/>
<organism>
    <name type="scientific">Thermosipho melanesiensis (strain DSM 12029 / CIP 104789 / BI429)</name>
    <dbReference type="NCBI Taxonomy" id="391009"/>
    <lineage>
        <taxon>Bacteria</taxon>
        <taxon>Thermotogati</taxon>
        <taxon>Thermotogota</taxon>
        <taxon>Thermotogae</taxon>
        <taxon>Thermotogales</taxon>
        <taxon>Fervidobacteriaceae</taxon>
        <taxon>Thermosipho</taxon>
    </lineage>
</organism>
<keyword id="KW-0240">DNA-directed RNA polymerase</keyword>
<keyword id="KW-0548">Nucleotidyltransferase</keyword>
<keyword id="KW-0804">Transcription</keyword>
<keyword id="KW-0808">Transferase</keyword>
<evidence type="ECO:0000255" key="1">
    <source>
        <dbReference type="HAMAP-Rule" id="MF_00366"/>
    </source>
</evidence>
<reference key="1">
    <citation type="submission" date="2007-05" db="EMBL/GenBank/DDBJ databases">
        <title>Complete sequence of Thermosipho melanesiensis BI429.</title>
        <authorList>
            <consortium name="US DOE Joint Genome Institute"/>
            <person name="Copeland A."/>
            <person name="Lucas S."/>
            <person name="Lapidus A."/>
            <person name="Barry K."/>
            <person name="Glavina del Rio T."/>
            <person name="Dalin E."/>
            <person name="Tice H."/>
            <person name="Pitluck S."/>
            <person name="Chertkov O."/>
            <person name="Brettin T."/>
            <person name="Bruce D."/>
            <person name="Detter J.C."/>
            <person name="Han C."/>
            <person name="Schmutz J."/>
            <person name="Larimer F."/>
            <person name="Land M."/>
            <person name="Hauser L."/>
            <person name="Kyrpides N."/>
            <person name="Mikhailova N."/>
            <person name="Nelson K."/>
            <person name="Gogarten J.P."/>
            <person name="Noll K."/>
            <person name="Richardson P."/>
        </authorList>
    </citation>
    <scope>NUCLEOTIDE SEQUENCE [LARGE SCALE GENOMIC DNA]</scope>
    <source>
        <strain>DSM 12029 / CIP 104789 / BI429</strain>
    </source>
</reference>
<comment type="function">
    <text evidence="1">Promotes RNA polymerase assembly. Latches the N- and C-terminal regions of the beta' subunit thereby facilitating its interaction with the beta and alpha subunits.</text>
</comment>
<comment type="catalytic activity">
    <reaction evidence="1">
        <text>RNA(n) + a ribonucleoside 5'-triphosphate = RNA(n+1) + diphosphate</text>
        <dbReference type="Rhea" id="RHEA:21248"/>
        <dbReference type="Rhea" id="RHEA-COMP:14527"/>
        <dbReference type="Rhea" id="RHEA-COMP:17342"/>
        <dbReference type="ChEBI" id="CHEBI:33019"/>
        <dbReference type="ChEBI" id="CHEBI:61557"/>
        <dbReference type="ChEBI" id="CHEBI:140395"/>
        <dbReference type="EC" id="2.7.7.6"/>
    </reaction>
</comment>
<comment type="subunit">
    <text evidence="1">The RNAP catalytic core consists of 2 alpha, 1 beta, 1 beta' and 1 omega subunit. When a sigma factor is associated with the core the holoenzyme is formed, which can initiate transcription.</text>
</comment>
<comment type="similarity">
    <text evidence="1">Belongs to the RNA polymerase subunit omega family.</text>
</comment>
<feature type="chain" id="PRO_1000205533" description="DNA-directed RNA polymerase subunit omega">
    <location>
        <begin position="1"/>
        <end position="75"/>
    </location>
</feature>
<dbReference type="EC" id="2.7.7.6" evidence="1"/>
<dbReference type="EMBL" id="CP000716">
    <property type="protein sequence ID" value="ABR29975.1"/>
    <property type="molecule type" value="Genomic_DNA"/>
</dbReference>
<dbReference type="RefSeq" id="WP_012056337.1">
    <property type="nucleotide sequence ID" value="NC_009616.1"/>
</dbReference>
<dbReference type="SMR" id="A6LJ74"/>
<dbReference type="STRING" id="391009.Tmel_0098"/>
<dbReference type="KEGG" id="tme:Tmel_0098"/>
<dbReference type="eggNOG" id="COG1758">
    <property type="taxonomic scope" value="Bacteria"/>
</dbReference>
<dbReference type="HOGENOM" id="CLU_125406_4_0_0"/>
<dbReference type="OrthoDB" id="48414at2"/>
<dbReference type="Proteomes" id="UP000001110">
    <property type="component" value="Chromosome"/>
</dbReference>
<dbReference type="GO" id="GO:0000428">
    <property type="term" value="C:DNA-directed RNA polymerase complex"/>
    <property type="evidence" value="ECO:0007669"/>
    <property type="project" value="UniProtKB-KW"/>
</dbReference>
<dbReference type="GO" id="GO:0003677">
    <property type="term" value="F:DNA binding"/>
    <property type="evidence" value="ECO:0007669"/>
    <property type="project" value="UniProtKB-UniRule"/>
</dbReference>
<dbReference type="GO" id="GO:0003899">
    <property type="term" value="F:DNA-directed RNA polymerase activity"/>
    <property type="evidence" value="ECO:0007669"/>
    <property type="project" value="UniProtKB-UniRule"/>
</dbReference>
<dbReference type="GO" id="GO:0006351">
    <property type="term" value="P:DNA-templated transcription"/>
    <property type="evidence" value="ECO:0007669"/>
    <property type="project" value="UniProtKB-UniRule"/>
</dbReference>
<dbReference type="Gene3D" id="3.90.940.10">
    <property type="match status" value="1"/>
</dbReference>
<dbReference type="HAMAP" id="MF_00366">
    <property type="entry name" value="RNApol_bact_RpoZ"/>
    <property type="match status" value="1"/>
</dbReference>
<dbReference type="InterPro" id="IPR003716">
    <property type="entry name" value="DNA-dir_RNA_pol_omega"/>
</dbReference>
<dbReference type="InterPro" id="IPR006110">
    <property type="entry name" value="Pol_omega/Rpo6/RPB6"/>
</dbReference>
<dbReference type="InterPro" id="IPR036161">
    <property type="entry name" value="RPB6/omega-like_sf"/>
</dbReference>
<dbReference type="Pfam" id="PF01192">
    <property type="entry name" value="RNA_pol_Rpb6"/>
    <property type="match status" value="1"/>
</dbReference>
<dbReference type="SMART" id="SM01409">
    <property type="entry name" value="RNA_pol_Rpb6"/>
    <property type="match status" value="1"/>
</dbReference>
<dbReference type="SUPFAM" id="SSF63562">
    <property type="entry name" value="RPB6/omega subunit-like"/>
    <property type="match status" value="1"/>
</dbReference>
<sequence length="75" mass="8750">MNPVINYDELLKKIPYKFAIPIAVAKRAENLKEFAHSYVETWDNNYVSIALKELSEGYIRIKNEEILKVLIPNVK</sequence>